<dbReference type="EMBL" id="CP000750">
    <property type="protein sequence ID" value="ABS04870.1"/>
    <property type="molecule type" value="Genomic_DNA"/>
</dbReference>
<dbReference type="RefSeq" id="WP_012086870.1">
    <property type="nucleotide sequence ID" value="NC_009664.2"/>
</dbReference>
<dbReference type="SMR" id="A6WDI1"/>
<dbReference type="STRING" id="266940.Krad_3406"/>
<dbReference type="KEGG" id="kra:Krad_3406"/>
<dbReference type="eggNOG" id="COG1420">
    <property type="taxonomic scope" value="Bacteria"/>
</dbReference>
<dbReference type="HOGENOM" id="CLU_050019_2_0_11"/>
<dbReference type="OrthoDB" id="9783139at2"/>
<dbReference type="Proteomes" id="UP000001116">
    <property type="component" value="Chromosome"/>
</dbReference>
<dbReference type="GO" id="GO:0003677">
    <property type="term" value="F:DNA binding"/>
    <property type="evidence" value="ECO:0007669"/>
    <property type="project" value="InterPro"/>
</dbReference>
<dbReference type="GO" id="GO:0003700">
    <property type="term" value="F:DNA-binding transcription factor activity"/>
    <property type="evidence" value="ECO:0007669"/>
    <property type="project" value="InterPro"/>
</dbReference>
<dbReference type="GO" id="GO:0045892">
    <property type="term" value="P:negative regulation of DNA-templated transcription"/>
    <property type="evidence" value="ECO:0007669"/>
    <property type="project" value="UniProtKB-UniRule"/>
</dbReference>
<dbReference type="FunFam" id="1.10.10.10:FF:000049">
    <property type="entry name" value="Heat-inducible transcription repressor HrcA"/>
    <property type="match status" value="1"/>
</dbReference>
<dbReference type="Gene3D" id="3.30.450.40">
    <property type="match status" value="1"/>
</dbReference>
<dbReference type="Gene3D" id="3.30.390.60">
    <property type="entry name" value="Heat-inducible transcription repressor hrca homolog, domain 3"/>
    <property type="match status" value="1"/>
</dbReference>
<dbReference type="Gene3D" id="1.10.10.10">
    <property type="entry name" value="Winged helix-like DNA-binding domain superfamily/Winged helix DNA-binding domain"/>
    <property type="match status" value="1"/>
</dbReference>
<dbReference type="HAMAP" id="MF_00081">
    <property type="entry name" value="HrcA"/>
    <property type="match status" value="1"/>
</dbReference>
<dbReference type="InterPro" id="IPR001034">
    <property type="entry name" value="DeoR_HTH"/>
</dbReference>
<dbReference type="InterPro" id="IPR029016">
    <property type="entry name" value="GAF-like_dom_sf"/>
</dbReference>
<dbReference type="InterPro" id="IPR002571">
    <property type="entry name" value="HrcA"/>
</dbReference>
<dbReference type="InterPro" id="IPR021153">
    <property type="entry name" value="HrcA_C"/>
</dbReference>
<dbReference type="InterPro" id="IPR036388">
    <property type="entry name" value="WH-like_DNA-bd_sf"/>
</dbReference>
<dbReference type="InterPro" id="IPR036390">
    <property type="entry name" value="WH_DNA-bd_sf"/>
</dbReference>
<dbReference type="InterPro" id="IPR023120">
    <property type="entry name" value="WHTH_transcript_rep_HrcA_IDD"/>
</dbReference>
<dbReference type="NCBIfam" id="TIGR00331">
    <property type="entry name" value="hrcA"/>
    <property type="match status" value="1"/>
</dbReference>
<dbReference type="PANTHER" id="PTHR34824">
    <property type="entry name" value="HEAT-INDUCIBLE TRANSCRIPTION REPRESSOR HRCA"/>
    <property type="match status" value="1"/>
</dbReference>
<dbReference type="PANTHER" id="PTHR34824:SF1">
    <property type="entry name" value="HEAT-INDUCIBLE TRANSCRIPTION REPRESSOR HRCA"/>
    <property type="match status" value="1"/>
</dbReference>
<dbReference type="Pfam" id="PF01628">
    <property type="entry name" value="HrcA"/>
    <property type="match status" value="1"/>
</dbReference>
<dbReference type="Pfam" id="PF08220">
    <property type="entry name" value="HTH_DeoR"/>
    <property type="match status" value="1"/>
</dbReference>
<dbReference type="PIRSF" id="PIRSF005485">
    <property type="entry name" value="HrcA"/>
    <property type="match status" value="1"/>
</dbReference>
<dbReference type="SUPFAM" id="SSF55781">
    <property type="entry name" value="GAF domain-like"/>
    <property type="match status" value="1"/>
</dbReference>
<dbReference type="SUPFAM" id="SSF46785">
    <property type="entry name" value="Winged helix' DNA-binding domain"/>
    <property type="match status" value="1"/>
</dbReference>
<evidence type="ECO:0000255" key="1">
    <source>
        <dbReference type="HAMAP-Rule" id="MF_00081"/>
    </source>
</evidence>
<proteinExistence type="inferred from homology"/>
<accession>A6WDI1</accession>
<reference key="1">
    <citation type="journal article" date="2008" name="PLoS ONE">
        <title>Survival in nuclear waste, extreme resistance, and potential applications gleaned from the genome sequence of Kineococcus radiotolerans SRS30216.</title>
        <authorList>
            <person name="Bagwell C.E."/>
            <person name="Bhat S."/>
            <person name="Hawkins G.M."/>
            <person name="Smith B.W."/>
            <person name="Biswas T."/>
            <person name="Hoover T.R."/>
            <person name="Saunders E."/>
            <person name="Han C.S."/>
            <person name="Tsodikov O.V."/>
            <person name="Shimkets L.J."/>
        </authorList>
    </citation>
    <scope>NUCLEOTIDE SEQUENCE [LARGE SCALE GENOMIC DNA]</scope>
    <source>
        <strain>ATCC BAA-149 / DSM 14245 / SRS30216</strain>
    </source>
</reference>
<keyword id="KW-1185">Reference proteome</keyword>
<keyword id="KW-0678">Repressor</keyword>
<keyword id="KW-0346">Stress response</keyword>
<keyword id="KW-0804">Transcription</keyword>
<keyword id="KW-0805">Transcription regulation</keyword>
<organism>
    <name type="scientific">Kineococcus radiotolerans (strain ATCC BAA-149 / DSM 14245 / SRS30216)</name>
    <dbReference type="NCBI Taxonomy" id="266940"/>
    <lineage>
        <taxon>Bacteria</taxon>
        <taxon>Bacillati</taxon>
        <taxon>Actinomycetota</taxon>
        <taxon>Actinomycetes</taxon>
        <taxon>Kineosporiales</taxon>
        <taxon>Kineosporiaceae</taxon>
        <taxon>Kineococcus</taxon>
    </lineage>
</organism>
<feature type="chain" id="PRO_1000075288" description="Heat-inducible transcription repressor HrcA">
    <location>
        <begin position="1"/>
        <end position="346"/>
    </location>
</feature>
<comment type="function">
    <text evidence="1">Negative regulator of class I heat shock genes (grpE-dnaK-dnaJ and groELS operons). Prevents heat-shock induction of these operons.</text>
</comment>
<comment type="similarity">
    <text evidence="1">Belongs to the HrcA family.</text>
</comment>
<sequence length="346" mass="36999">MSDDRRLAVLRAIVEDYVSSHEPVGSKALVERHQLGVSPATIRNDMAVLEEEGYITQPHTSAGRIPTDKGYRLFVDRLANVKPMSPAEKRAIQTFLEGADDVDDIVDRTVRLLAQITRQAAVVQYPSLSRAAVRHVELVPVGGRSALLVLITDSGRVEQRVLDVRSAADPESLAAALAALRTRVNARVVGKRLRDAREDLTDLVQQTPPGDLAVAAEVAVALGDCLTAGLEERVVIAGTANLVKSGADLSTSLGSVLEALEEHVVLLRLVQELTEDSDRGGLTVRIGAENLHLGLDGTSVVTSGYGTGPDTVLARLGVLGPTRMDYPTTMAAVRAVSRYVSRILAQ</sequence>
<gene>
    <name evidence="1" type="primary">hrcA</name>
    <name type="ordered locus">Krad_3406</name>
</gene>
<name>HRCA_KINRD</name>
<protein>
    <recommendedName>
        <fullName evidence="1">Heat-inducible transcription repressor HrcA</fullName>
    </recommendedName>
</protein>